<protein>
    <recommendedName>
        <fullName evidence="1">Nucleoprotein</fullName>
        <ecNumber evidence="1">3.1.13.-</ecNumber>
    </recommendedName>
    <alternativeName>
        <fullName evidence="1">Nucleocapsid protein</fullName>
    </alternativeName>
    <alternativeName>
        <fullName evidence="1">Protein N</fullName>
    </alternativeName>
</protein>
<sequence length="564" mass="63027">MAHSKEVPSFRWTQSLRRGLSQFTQTVKSDVLKDAKLIADSIDFNQVAQVQRALRKTKRGEEDLNKLRDLNKEVDRLMSMRSVQRNTVFKAGDLGRVERMELASGLGNLKTKFRRAETGSQGVYMGNLSQSQLAKRSEILRTLGFQQQGTGGNGVVRVWDVKDPSKLNNQFGSVPALTIACMTVQGGETMNSVIQALTSLGLLYTVKYPNLSDLDRLTQEHDCLQIVTKDESSINISGYNFSLSAAVKAGASILDDGNMLETIRVTPDNFSSLIKSTIQVKRREGMFIDEKPGNRNPYENLLYKLCLSGDGWPYIGSRSQIIGRSWDNTSIDLTRKPVAGPRQPEKNGQNLRLANLTEIQEAVIREAVGKLDPTNTLWLDIEGPATDPVEMALFQPAGSKYIHCFRKPHDEKGFKNGSRHSHGILMKDIEDAMPGVLSYVIGLLPPDMVVTTQGSDDIRKLFDLHGRRDLKLVDVRLTSEQARQFDQQVWEKFGHLCKHHNGVVVSKKKRDKDAPFKLASSEPHCALLDCIMFQSVLDGKLYEEELTPLLPPSLLFLPKAAYAL</sequence>
<gene>
    <name evidence="1" type="primary">N</name>
</gene>
<dbReference type="EC" id="3.1.13.-" evidence="1"/>
<dbReference type="EMBL" id="X15827">
    <property type="protein sequence ID" value="CAA33824.1"/>
    <property type="molecule type" value="Genomic_RNA"/>
</dbReference>
<dbReference type="EMBL" id="D10072">
    <property type="protein sequence ID" value="BAA00965.1"/>
    <property type="molecule type" value="Genomic_RNA"/>
</dbReference>
<dbReference type="PIR" id="JQ1268">
    <property type="entry name" value="VHXPJV"/>
</dbReference>
<dbReference type="PIR" id="S06896">
    <property type="entry name" value="S06896"/>
</dbReference>
<dbReference type="PIR" id="S12480">
    <property type="entry name" value="S12480"/>
</dbReference>
<dbReference type="SMR" id="P14239"/>
<dbReference type="Proteomes" id="UP000127886">
    <property type="component" value="Genome"/>
</dbReference>
<dbReference type="GO" id="GO:0019029">
    <property type="term" value="C:helical viral capsid"/>
    <property type="evidence" value="ECO:0007669"/>
    <property type="project" value="UniProtKB-UniRule"/>
</dbReference>
<dbReference type="GO" id="GO:0030430">
    <property type="term" value="C:host cell cytoplasm"/>
    <property type="evidence" value="ECO:0007669"/>
    <property type="project" value="UniProtKB-SubCell"/>
</dbReference>
<dbReference type="GO" id="GO:1990904">
    <property type="term" value="C:ribonucleoprotein complex"/>
    <property type="evidence" value="ECO:0007669"/>
    <property type="project" value="UniProtKB-KW"/>
</dbReference>
<dbReference type="GO" id="GO:0019013">
    <property type="term" value="C:viral nucleocapsid"/>
    <property type="evidence" value="ECO:0007669"/>
    <property type="project" value="UniProtKB-UniRule"/>
</dbReference>
<dbReference type="GO" id="GO:0016787">
    <property type="term" value="F:hydrolase activity"/>
    <property type="evidence" value="ECO:0007669"/>
    <property type="project" value="UniProtKB-KW"/>
</dbReference>
<dbReference type="GO" id="GO:0046872">
    <property type="term" value="F:metal ion binding"/>
    <property type="evidence" value="ECO:0007669"/>
    <property type="project" value="UniProtKB-UniRule"/>
</dbReference>
<dbReference type="GO" id="GO:0003723">
    <property type="term" value="F:RNA binding"/>
    <property type="evidence" value="ECO:0007669"/>
    <property type="project" value="UniProtKB-UniRule"/>
</dbReference>
<dbReference type="GO" id="GO:0039689">
    <property type="term" value="P:negative stranded viral RNA replication"/>
    <property type="evidence" value="ECO:0000250"/>
    <property type="project" value="UniProtKB"/>
</dbReference>
<dbReference type="GO" id="GO:0039696">
    <property type="term" value="P:RNA-templated viral transcription"/>
    <property type="evidence" value="ECO:0000250"/>
    <property type="project" value="UniProtKB"/>
</dbReference>
<dbReference type="GO" id="GO:0039724">
    <property type="term" value="P:symbiont-mediated suppression of host cytoplasmic pattern recognition receptor signaling pathway via inhibition of IKBKE activity"/>
    <property type="evidence" value="ECO:0007669"/>
    <property type="project" value="UniProtKB-UniRule"/>
</dbReference>
<dbReference type="FunFam" id="1.10.150.550:FF:000001">
    <property type="entry name" value="Nucleoprotein"/>
    <property type="match status" value="1"/>
</dbReference>
<dbReference type="FunFam" id="1.10.150.550:FF:000002">
    <property type="entry name" value="Nucleoprotein"/>
    <property type="match status" value="1"/>
</dbReference>
<dbReference type="FunFam" id="3.30.420.410:FF:000001">
    <property type="entry name" value="Nucleoprotein"/>
    <property type="match status" value="1"/>
</dbReference>
<dbReference type="Gene3D" id="3.30.420.410">
    <property type="entry name" value="Arenaviral nucleoprotein, C-terminal domain"/>
    <property type="match status" value="1"/>
</dbReference>
<dbReference type="Gene3D" id="1.10.150.550">
    <property type="entry name" value="Arenavirus nucleocapsid protein, head domain"/>
    <property type="match status" value="2"/>
</dbReference>
<dbReference type="HAMAP" id="MF_04085">
    <property type="entry name" value="ARENA_NCAP"/>
    <property type="match status" value="1"/>
</dbReference>
<dbReference type="InterPro" id="IPR000229">
    <property type="entry name" value="Nucleocapsid_arenaviridae"/>
</dbReference>
<dbReference type="InterPro" id="IPR035084">
    <property type="entry name" value="Nucleocapsid_C_arenaviridae"/>
</dbReference>
<dbReference type="InterPro" id="IPR038115">
    <property type="entry name" value="Nucleocapsid_C_sf"/>
</dbReference>
<dbReference type="InterPro" id="IPR035083">
    <property type="entry name" value="Nucleocapsid_N_arenaviridae"/>
</dbReference>
<dbReference type="InterPro" id="IPR012337">
    <property type="entry name" value="RNaseH-like_sf"/>
</dbReference>
<dbReference type="Pfam" id="PF17290">
    <property type="entry name" value="Arena_ncap_C"/>
    <property type="match status" value="1"/>
</dbReference>
<dbReference type="Pfam" id="PF00843">
    <property type="entry name" value="Arena_nucleocap"/>
    <property type="match status" value="1"/>
</dbReference>
<dbReference type="PIRSF" id="PIRSF004029">
    <property type="entry name" value="N_ArenaV"/>
    <property type="match status" value="1"/>
</dbReference>
<dbReference type="SUPFAM" id="SSF53098">
    <property type="entry name" value="Ribonuclease H-like"/>
    <property type="match status" value="1"/>
</dbReference>
<accession>P14239</accession>
<organismHost>
    <name type="scientific">Akodon azarae</name>
    <name type="common">Azara's grass mouse</name>
    <dbReference type="NCBI Taxonomy" id="29095"/>
</organismHost>
<organismHost>
    <name type="scientific">Bolomys</name>
    <dbReference type="NCBI Taxonomy" id="10080"/>
</organismHost>
<organismHost>
    <name type="scientific">Calomys laucha</name>
    <name type="common">Small vesper mouse</name>
    <dbReference type="NCBI Taxonomy" id="56211"/>
</organismHost>
<organismHost>
    <name type="scientific">Calomys musculinus</name>
    <name type="common">Drylands vesper mouse</name>
    <dbReference type="NCBI Taxonomy" id="56212"/>
</organismHost>
<organismHost>
    <name type="scientific">Homo sapiens</name>
    <name type="common">Human</name>
    <dbReference type="NCBI Taxonomy" id="9606"/>
</organismHost>
<name>NCAP_JUNIN</name>
<proteinExistence type="evidence at protein level"/>
<feature type="chain" id="PRO_0000079189" description="Nucleoprotein">
    <location>
        <begin position="1"/>
        <end position="564"/>
    </location>
</feature>
<feature type="region of interest" description="Binding site for the cap structure m7GTP" evidence="1">
    <location>
        <begin position="54"/>
        <end position="236"/>
    </location>
</feature>
<feature type="binding site" evidence="1">
    <location>
        <position position="380"/>
    </location>
    <ligand>
        <name>Mn(2+)</name>
        <dbReference type="ChEBI" id="CHEBI:29035"/>
    </ligand>
</feature>
<feature type="binding site" evidence="1">
    <location>
        <position position="382"/>
    </location>
    <ligand>
        <name>Mn(2+)</name>
        <dbReference type="ChEBI" id="CHEBI:29035"/>
    </ligand>
</feature>
<feature type="binding site" evidence="1">
    <location>
        <position position="390"/>
    </location>
    <ligand>
        <name>Zn(2+)</name>
        <dbReference type="ChEBI" id="CHEBI:29105"/>
    </ligand>
</feature>
<feature type="binding site" evidence="1">
    <location>
        <position position="497"/>
    </location>
    <ligand>
        <name>Zn(2+)</name>
        <dbReference type="ChEBI" id="CHEBI:29105"/>
    </ligand>
</feature>
<feature type="binding site" evidence="1">
    <location>
        <position position="500"/>
    </location>
    <ligand>
        <name>Zn(2+)</name>
        <dbReference type="ChEBI" id="CHEBI:29105"/>
    </ligand>
</feature>
<feature type="binding site" evidence="1">
    <location>
        <position position="525"/>
    </location>
    <ligand>
        <name>Zn(2+)</name>
        <dbReference type="ChEBI" id="CHEBI:29105"/>
    </ligand>
</feature>
<feature type="binding site" evidence="1">
    <location>
        <position position="529"/>
    </location>
    <ligand>
        <name>Mn(2+)</name>
        <dbReference type="ChEBI" id="CHEBI:29035"/>
    </ligand>
</feature>
<feature type="site" description="Important for exonuclease activity" evidence="1">
    <location>
        <position position="457"/>
    </location>
</feature>
<evidence type="ECO:0000255" key="1">
    <source>
        <dbReference type="HAMAP-Rule" id="MF_04085"/>
    </source>
</evidence>
<evidence type="ECO:0000269" key="2">
    <source>
    </source>
</evidence>
<keyword id="KW-0167">Capsid protein</keyword>
<keyword id="KW-1139">Helical capsid protein</keyword>
<keyword id="KW-1035">Host cytoplasm</keyword>
<keyword id="KW-0945">Host-virus interaction</keyword>
<keyword id="KW-0378">Hydrolase</keyword>
<keyword id="KW-1224">Inhibition of host IKBKE by virus</keyword>
<keyword id="KW-1090">Inhibition of host innate immune response by virus</keyword>
<keyword id="KW-1113">Inhibition of host RLR pathway by virus</keyword>
<keyword id="KW-0922">Interferon antiviral system evasion</keyword>
<keyword id="KW-0464">Manganese</keyword>
<keyword id="KW-0479">Metal-binding</keyword>
<keyword id="KW-0687">Ribonucleoprotein</keyword>
<keyword id="KW-0694">RNA-binding</keyword>
<keyword id="KW-0899">Viral immunoevasion</keyword>
<keyword id="KW-0543">Viral nucleoprotein</keyword>
<keyword id="KW-0946">Virion</keyword>
<keyword id="KW-0862">Zinc</keyword>
<comment type="function">
    <text evidence="1">Encapsidates the genome, protecting it from nucleases. The encapsidated genomic RNA is termed the nucleocapsid (NC). Serves as template for viral transcription and replication. The increased presence of protein N in host cell does not seem to trigger the switch from transcription to replication as observed in other negative strain RNA viruses. Through the interaction with host IKBKE, strongly inhibits the phosphorylation and nuclear translocation of host IRF3, a protein involved in interferon activation pathway, leading to the inhibition of interferon-beta and IRF3-dependent promoters activation. Also encodes a functional 3'-5' exoribonuclease that degrades preferentially dsRNA substrates and thereby participates in the suppression of interferon induction.</text>
</comment>
<comment type="subunit">
    <text evidence="1 2">Homomultimerizes to form the nucleocapsid. Binds to viral genomic RNA. Interacts with glycoprotein G2. Interacts with protein Z; this interaction probably directs the encapsidated genome to budding sites. Interacts with protein L; this interaction does not interfere with Z-L interaction. Interacts with host IKBKE (via Protein kinase domain); the interaction inhibits IKBKE kinase activity (PubMed:22532683).</text>
</comment>
<comment type="subcellular location">
    <subcellularLocation>
        <location evidence="1">Virion</location>
    </subcellularLocation>
    <subcellularLocation>
        <location evidence="1">Host cytoplasm</location>
    </subcellularLocation>
</comment>
<comment type="domain">
    <text evidence="1">The N-terminal region is important for the cap-binding activity while the C-terminal region contains the 3'-5' exoribonuclease activity. A CCHE zinc binding site is present in the C-terminal region and may thus contribute to the substrate binding and/or the specificity of the exonuclease activity.</text>
</comment>
<comment type="similarity">
    <text evidence="1">Belongs to the arenaviridae nucleocapsid protein family.</text>
</comment>
<organism>
    <name type="scientific">Junin mammarenavirus</name>
    <name type="common">JUNV</name>
    <name type="synonym">Junn mammarenavirus</name>
    <dbReference type="NCBI Taxonomy" id="2169991"/>
    <lineage>
        <taxon>Viruses</taxon>
        <taxon>Riboviria</taxon>
        <taxon>Orthornavirae</taxon>
        <taxon>Negarnaviricota</taxon>
        <taxon>Polyploviricotina</taxon>
        <taxon>Ellioviricetes</taxon>
        <taxon>Bunyavirales</taxon>
        <taxon>Arenaviridae</taxon>
        <taxon>Mammarenavirus</taxon>
    </lineage>
</organism>
<reference key="1">
    <citation type="journal article" date="1989" name="Nucleic Acids Res.">
        <title>Nucleocapsid protein gene of Junin arenavirus (cDNA sequence).</title>
        <authorList>
            <person name="Ghiringhelli P.D."/>
            <person name="Rivera-Pomar R.V."/>
            <person name="Baro N.I."/>
            <person name="Rosas M.F."/>
            <person name="Grau O."/>
            <person name="Romanowski V."/>
        </authorList>
    </citation>
    <scope>NUCLEOTIDE SEQUENCE [GENOMIC RNA]</scope>
    <source>
        <strain>MC2</strain>
    </source>
</reference>
<reference key="2">
    <citation type="journal article" date="1991" name="J. Gen. Virol.">
        <title>Molecular organization of Junin virus S RNA: complete nucleotide sequence, relationship with other members of the Arenaviridae and unusual secondary structures.</title>
        <authorList>
            <person name="Ghiringhelli P.D."/>
            <person name="Rivera-Pomar R.V."/>
            <person name="Lozano M.E."/>
            <person name="Grau O."/>
            <person name="Romanowski V."/>
        </authorList>
    </citation>
    <scope>NUCLEOTIDE SEQUENCE [GENOMIC RNA]</scope>
    <source>
        <strain>MC2</strain>
    </source>
</reference>
<reference key="3">
    <citation type="journal article" date="2001" name="J. Gen. Virol.">
        <title>Zinc-binding properties of Junin virus nucleocapsid protein.</title>
        <authorList>
            <person name="Tortorici M.A."/>
            <person name="Ghiringhelli P.D."/>
            <person name="Lozano M.E."/>
            <person name="Albarino C.G."/>
            <person name="Romanowski V."/>
        </authorList>
    </citation>
    <scope>ZINC BINDING</scope>
</reference>
<reference key="4">
    <citation type="journal article" date="2012" name="J. Virol.">
        <title>Arenavirus nucleoprotein targets interferon regulatory factor-activating kinase IKKepsilon.</title>
        <authorList>
            <person name="Pythoud C."/>
            <person name="Rodrigo W.W."/>
            <person name="Pasqual G."/>
            <person name="Rothenberger S."/>
            <person name="Martinez-Sobrido L."/>
            <person name="de la Torre J.C."/>
            <person name="Kunz S."/>
        </authorList>
    </citation>
    <scope>INTERACTION WITH HOST IKBKE</scope>
</reference>